<feature type="chain" id="PRO_0000442585" description="GDP-polyphosphate phosphotransferase">
    <location>
        <begin position="1"/>
        <end position="283"/>
    </location>
</feature>
<proteinExistence type="evidence at protein level"/>
<accession>A0QQV6</accession>
<name>PK21_MYCS2</name>
<sequence>MLDSTGYAVRDDDDDDPELLLPGGEVVDTWREGYPYDERMHRADYEEQKRLLQIELLKLQKWSQAHGHRHVIVFEGRDAAGKGGTIKRFMEHLNPRGARVVALEKPTERERTQWYFQRYVEHLPAAGELVLFDRSWYNRAGVERVMGYCTPKQHAEFIRQAPLFEQMLVNDGISLTKLWFSVTRSEQLTRFTIRQVDPVRQWKLSPTDLASLDKWDDYTAAKEEMFAWTDTEIAPWTVVKSNDKKRARINAMRYVLGKFDYDNKDHEVVGQADPLIVGRALSD</sequence>
<keyword id="KW-0418">Kinase</keyword>
<keyword id="KW-1185">Reference proteome</keyword>
<keyword id="KW-0808">Transferase</keyword>
<protein>
    <recommendedName>
        <fullName evidence="2">GDP-polyphosphate phosphotransferase</fullName>
        <ecNumber evidence="1">2.7.4.-</ecNumber>
    </recommendedName>
    <alternativeName>
        <fullName evidence="2">Polyphosphate kinase PPK2</fullName>
    </alternativeName>
</protein>
<gene>
    <name evidence="3" type="ordered locus">MSMEG_0891</name>
</gene>
<comment type="function">
    <text evidence="1">Uses inorganic polyphosphate (polyP) as a donor to convert GDP to GTP.</text>
</comment>
<comment type="catalytic activity">
    <reaction evidence="1">
        <text>[phosphate](n) + GTP = [phosphate](n+1) + GDP</text>
        <dbReference type="Rhea" id="RHEA:55412"/>
        <dbReference type="Rhea" id="RHEA-COMP:9859"/>
        <dbReference type="Rhea" id="RHEA-COMP:14280"/>
        <dbReference type="ChEBI" id="CHEBI:16838"/>
        <dbReference type="ChEBI" id="CHEBI:37565"/>
        <dbReference type="ChEBI" id="CHEBI:58189"/>
    </reaction>
    <physiologicalReaction direction="right-to-left" evidence="1">
        <dbReference type="Rhea" id="RHEA:55414"/>
    </physiologicalReaction>
</comment>
<comment type="induction">
    <text evidence="1">Expression increases during the exponential phase of growth and remains at a steady level up to the stationary phase.</text>
</comment>
<comment type="disruption phenotype">
    <text evidence="1">Knockout mutant is more susceptible to acid, heat and hypoxic stress. Mutant has reduced GTP levels.</text>
</comment>
<comment type="similarity">
    <text evidence="2">Belongs to the polyphosphate kinase 2 (PPK2) family. Class I subfamily.</text>
</comment>
<dbReference type="EC" id="2.7.4.-" evidence="1"/>
<dbReference type="EMBL" id="CP000480">
    <property type="protein sequence ID" value="ABK70472.1"/>
    <property type="molecule type" value="Genomic_DNA"/>
</dbReference>
<dbReference type="RefSeq" id="YP_885294.1">
    <property type="nucleotide sequence ID" value="NC_008596.1"/>
</dbReference>
<dbReference type="SMR" id="A0QQV6"/>
<dbReference type="STRING" id="246196.MSMEG_0891"/>
<dbReference type="PaxDb" id="246196-MSMEI_0870"/>
<dbReference type="KEGG" id="msm:MSMEG_0891"/>
<dbReference type="PATRIC" id="fig|246196.19.peg.881"/>
<dbReference type="eggNOG" id="COG2326">
    <property type="taxonomic scope" value="Bacteria"/>
</dbReference>
<dbReference type="OrthoDB" id="9775224at2"/>
<dbReference type="BRENDA" id="2.7.4.34">
    <property type="organism ID" value="3512"/>
</dbReference>
<dbReference type="Proteomes" id="UP000000757">
    <property type="component" value="Chromosome"/>
</dbReference>
<dbReference type="GO" id="GO:0008976">
    <property type="term" value="F:polyphosphate kinase activity"/>
    <property type="evidence" value="ECO:0007669"/>
    <property type="project" value="InterPro"/>
</dbReference>
<dbReference type="GO" id="GO:0006793">
    <property type="term" value="P:phosphorus metabolic process"/>
    <property type="evidence" value="ECO:0007669"/>
    <property type="project" value="InterPro"/>
</dbReference>
<dbReference type="Gene3D" id="3.40.50.300">
    <property type="entry name" value="P-loop containing nucleotide triphosphate hydrolases"/>
    <property type="match status" value="1"/>
</dbReference>
<dbReference type="InterPro" id="IPR027417">
    <property type="entry name" value="P-loop_NTPase"/>
</dbReference>
<dbReference type="InterPro" id="IPR016898">
    <property type="entry name" value="Polyphosphate_phosphotransfera"/>
</dbReference>
<dbReference type="InterPro" id="IPR022488">
    <property type="entry name" value="PPK2-related"/>
</dbReference>
<dbReference type="InterPro" id="IPR022486">
    <property type="entry name" value="PPK2_PA0141"/>
</dbReference>
<dbReference type="NCBIfam" id="TIGR03707">
    <property type="entry name" value="PPK2_P_aer"/>
    <property type="match status" value="1"/>
</dbReference>
<dbReference type="PANTHER" id="PTHR34383:SF1">
    <property type="entry name" value="ADP-POLYPHOSPHATE PHOSPHOTRANSFERASE"/>
    <property type="match status" value="1"/>
</dbReference>
<dbReference type="PANTHER" id="PTHR34383">
    <property type="entry name" value="POLYPHOSPHATE:AMP PHOSPHOTRANSFERASE-RELATED"/>
    <property type="match status" value="1"/>
</dbReference>
<dbReference type="Pfam" id="PF03976">
    <property type="entry name" value="PPK2"/>
    <property type="match status" value="1"/>
</dbReference>
<dbReference type="PIRSF" id="PIRSF028756">
    <property type="entry name" value="PPK2_prd"/>
    <property type="match status" value="1"/>
</dbReference>
<dbReference type="SUPFAM" id="SSF52540">
    <property type="entry name" value="P-loop containing nucleoside triphosphate hydrolases"/>
    <property type="match status" value="1"/>
</dbReference>
<evidence type="ECO:0000269" key="1">
    <source>
    </source>
</evidence>
<evidence type="ECO:0000305" key="2"/>
<evidence type="ECO:0000312" key="3">
    <source>
        <dbReference type="EMBL" id="ABK70472.1"/>
    </source>
</evidence>
<reference key="1">
    <citation type="submission" date="2006-10" db="EMBL/GenBank/DDBJ databases">
        <authorList>
            <person name="Fleischmann R.D."/>
            <person name="Dodson R.J."/>
            <person name="Haft D.H."/>
            <person name="Merkel J.S."/>
            <person name="Nelson W.C."/>
            <person name="Fraser C.M."/>
        </authorList>
    </citation>
    <scope>NUCLEOTIDE SEQUENCE [LARGE SCALE GENOMIC DNA]</scope>
    <source>
        <strain>ATCC 700084 / mc(2)155</strain>
    </source>
</reference>
<reference key="2">
    <citation type="journal article" date="2009" name="Mol. Microbiol.">
        <title>Polyphosphate kinase 2: a modulator of nucleoside diphosphate kinase activity in mycobacteria.</title>
        <authorList>
            <person name="Sureka K."/>
            <person name="Sanyal S."/>
            <person name="Basu J."/>
            <person name="Kundu M."/>
        </authorList>
    </citation>
    <scope>FUNCTION</scope>
    <scope>CATALYTIC ACTIVITY</scope>
    <scope>INDUCTION</scope>
    <scope>DISRUPTION PHENOTYPE</scope>
</reference>
<organism>
    <name type="scientific">Mycolicibacterium smegmatis (strain ATCC 700084 / mc(2)155)</name>
    <name type="common">Mycobacterium smegmatis</name>
    <dbReference type="NCBI Taxonomy" id="246196"/>
    <lineage>
        <taxon>Bacteria</taxon>
        <taxon>Bacillati</taxon>
        <taxon>Actinomycetota</taxon>
        <taxon>Actinomycetes</taxon>
        <taxon>Mycobacteriales</taxon>
        <taxon>Mycobacteriaceae</taxon>
        <taxon>Mycolicibacterium</taxon>
    </lineage>
</organism>